<gene>
    <name type="primary">blmA</name>
</gene>
<feature type="chain" id="PRO_0000054296" description="Maltogenic alpha-amylase">
    <location>
        <begin position="1"/>
        <end position="578"/>
    </location>
</feature>
<name>AMYM_BACLI</name>
<keyword id="KW-0119">Carbohydrate metabolism</keyword>
<keyword id="KW-0326">Glycosidase</keyword>
<keyword id="KW-0378">Hydrolase</keyword>
<protein>
    <recommendedName>
        <fullName>Maltogenic alpha-amylase</fullName>
        <ecNumber>3.2.1.133</ecNumber>
    </recommendedName>
    <alternativeName>
        <fullName>Glucan 1,4-alpha-maltohydrolase</fullName>
    </alternativeName>
</protein>
<sequence length="578" mass="66924">MIELAAIHHQPFNSDAYSYNGRTLHIKIRTKKDDAEHVAWFGAILTNTPAHMESERAYVAKIGRNKQPMITGLPKCGLHSGSAIRIYLTALMIETLFTEAMVHVRFRYRQTHVLNFRLFMRQTRLMHRLGQINRLVSNFSGAFRAGGKICSGKPLPWGRKDPEAHDFFGGHLQGIMTSWTIWKTWGEAGIYLTPIFAAPSNHKYDTLDYCSIDPHFGDEELFRTVVSRIHERGMKIMLDAVFNHIGTSQEWQDVVKNGETSRYKDWFIFILSLLKKAAMIHLRLVPRCRSSIAGTRKFRLICLILRCTGSANLISTAGVWMWQMKLIMRFGRNSGKPSPEKPDIFILGEIWHQADPWLRGDEFHIGHELPVHRTDDSLFFRRIDFSSQIASRINSQKMSGMKQVKEVMLNLLDSHERILTRCGGDQRKGARLFWHSCLLRQGRIYYPRKSGFTAAMIHCAGSAWFGKRKNRIKRCLAFMKPLIALRKQENDVLTYGALEWKLVDDQNDFVSFSRTHEGKELIYFFHQGREVRRVRLRDLKIASDKRIYDAWTEEALHDDDVVDIQPGDFSFLGRSKFC</sequence>
<reference key="1">
    <citation type="journal article" date="1992" name="J. Biol. Chem.">
        <title>Catalytic properties of the cloned amylase from Bacillus licheniformis.</title>
        <authorList>
            <person name="Kim I.C."/>
            <person name="Cha J.H."/>
            <person name="Kim J.R."/>
            <person name="Jang S.Y."/>
            <person name="Seo B.C."/>
            <person name="Cheong T.K."/>
            <person name="Lee D.S."/>
            <person name="Choi Y.D."/>
            <person name="Park K.H."/>
        </authorList>
    </citation>
    <scope>NUCLEOTIDE SEQUENCE [GENOMIC DNA]</scope>
    <source>
        <strain>ATCC 27811 / BCRC 10494 / FERM P-1038</strain>
    </source>
</reference>
<organism>
    <name type="scientific">Bacillus licheniformis</name>
    <dbReference type="NCBI Taxonomy" id="1402"/>
    <lineage>
        <taxon>Bacteria</taxon>
        <taxon>Bacillati</taxon>
        <taxon>Bacillota</taxon>
        <taxon>Bacilli</taxon>
        <taxon>Bacillales</taxon>
        <taxon>Bacillaceae</taxon>
        <taxon>Bacillus</taxon>
    </lineage>
</organism>
<comment type="function">
    <text>Converts starch into maltose. In contrary to other maltogenic alpha-amylases BlmA cannot hydrolyze 1,4-alpha-glucosidic linkage next to 1,6-alpha-glucosidic linkages.</text>
</comment>
<comment type="catalytic activity">
    <reaction>
        <text>hydrolysis of (1-&gt;4)-alpha-D-glucosidic linkages in polysaccharides so as to remove successive alpha-maltose residues from the non-reducing ends of the chains.</text>
        <dbReference type="EC" id="3.2.1.133"/>
    </reaction>
</comment>
<comment type="similarity">
    <text evidence="1">Belongs to the glycosyl hydrolase 13 family.</text>
</comment>
<accession>Q04977</accession>
<proteinExistence type="inferred from homology"/>
<dbReference type="EC" id="3.2.1.133"/>
<dbReference type="EMBL" id="X67133">
    <property type="protein sequence ID" value="CAA47612.1"/>
    <property type="molecule type" value="Genomic_DNA"/>
</dbReference>
<dbReference type="PIR" id="A44326">
    <property type="entry name" value="A44326"/>
</dbReference>
<dbReference type="PIR" id="S25010">
    <property type="entry name" value="S25010"/>
</dbReference>
<dbReference type="SMR" id="Q04977"/>
<dbReference type="CAZy" id="GH13">
    <property type="family name" value="Glycoside Hydrolase Family 13"/>
</dbReference>
<dbReference type="GO" id="GO:0043897">
    <property type="term" value="F:glucan 1,4-alpha-maltohydrolase activity"/>
    <property type="evidence" value="ECO:0007669"/>
    <property type="project" value="UniProtKB-EC"/>
</dbReference>
<dbReference type="GO" id="GO:0005975">
    <property type="term" value="P:carbohydrate metabolic process"/>
    <property type="evidence" value="ECO:0007669"/>
    <property type="project" value="InterPro"/>
</dbReference>
<dbReference type="CDD" id="cd02857">
    <property type="entry name" value="E_set_CDase_PDE_N"/>
    <property type="match status" value="1"/>
</dbReference>
<dbReference type="Gene3D" id="3.20.20.80">
    <property type="entry name" value="Glycosidases"/>
    <property type="match status" value="2"/>
</dbReference>
<dbReference type="Gene3D" id="2.60.40.10">
    <property type="entry name" value="Immunoglobulins"/>
    <property type="match status" value="1"/>
</dbReference>
<dbReference type="InterPro" id="IPR006047">
    <property type="entry name" value="Glyco_hydro_13_cat_dom"/>
</dbReference>
<dbReference type="InterPro" id="IPR004185">
    <property type="entry name" value="Glyco_hydro_13_lg-like_dom"/>
</dbReference>
<dbReference type="InterPro" id="IPR017853">
    <property type="entry name" value="Glycoside_hydrolase_SF"/>
</dbReference>
<dbReference type="InterPro" id="IPR013783">
    <property type="entry name" value="Ig-like_fold"/>
</dbReference>
<dbReference type="InterPro" id="IPR014756">
    <property type="entry name" value="Ig_E-set"/>
</dbReference>
<dbReference type="PANTHER" id="PTHR10357">
    <property type="entry name" value="ALPHA-AMYLASE FAMILY MEMBER"/>
    <property type="match status" value="1"/>
</dbReference>
<dbReference type="PANTHER" id="PTHR10357:SF210">
    <property type="entry name" value="MALTODEXTRIN GLUCOSIDASE"/>
    <property type="match status" value="1"/>
</dbReference>
<dbReference type="Pfam" id="PF00128">
    <property type="entry name" value="Alpha-amylase"/>
    <property type="match status" value="1"/>
</dbReference>
<dbReference type="Pfam" id="PF02903">
    <property type="entry name" value="Alpha-amylase_N"/>
    <property type="match status" value="1"/>
</dbReference>
<dbReference type="SMART" id="SM00642">
    <property type="entry name" value="Aamy"/>
    <property type="match status" value="1"/>
</dbReference>
<dbReference type="SUPFAM" id="SSF51445">
    <property type="entry name" value="(Trans)glycosidases"/>
    <property type="match status" value="1"/>
</dbReference>
<dbReference type="SUPFAM" id="SSF81296">
    <property type="entry name" value="E set domains"/>
    <property type="match status" value="1"/>
</dbReference>
<evidence type="ECO:0000305" key="1"/>